<sequence>MIRGRIMRKFLILSMLIFTTLCGCVDFSSSNSNGYYHDSWSYNNYTSFVDTHEHYYGKVVKVVDGDTVYVEVNGELWKIRLLGVDTPEIHKRNNPYEYYLLNGTPITDTKYLKEWGYKAKHFAEKELKNKTVIIVFDNEAPKKDKYGRYLAYIFINNSNNLINFNEELLKYGYARVYISNFELKDEFLNVEREAKENRVGLWNWSNN</sequence>
<protein>
    <recommendedName>
        <fullName>Uncharacterized protein MJ1439</fullName>
    </recommendedName>
</protein>
<proteinExistence type="inferred from homology"/>
<keyword id="KW-0255">Endonuclease</keyword>
<keyword id="KW-0378">Hydrolase</keyword>
<keyword id="KW-0540">Nuclease</keyword>
<keyword id="KW-1185">Reference proteome</keyword>
<gene>
    <name type="ordered locus">MJ1439</name>
</gene>
<evidence type="ECO:0000250" key="1"/>
<evidence type="ECO:0000255" key="2">
    <source>
        <dbReference type="PROSITE-ProRule" id="PRU00272"/>
    </source>
</evidence>
<organism>
    <name type="scientific">Methanocaldococcus jannaschii (strain ATCC 43067 / DSM 2661 / JAL-1 / JCM 10045 / NBRC 100440)</name>
    <name type="common">Methanococcus jannaschii</name>
    <dbReference type="NCBI Taxonomy" id="243232"/>
    <lineage>
        <taxon>Archaea</taxon>
        <taxon>Methanobacteriati</taxon>
        <taxon>Methanobacteriota</taxon>
        <taxon>Methanomada group</taxon>
        <taxon>Methanococci</taxon>
        <taxon>Methanococcales</taxon>
        <taxon>Methanocaldococcaceae</taxon>
        <taxon>Methanocaldococcus</taxon>
    </lineage>
</organism>
<dbReference type="EMBL" id="L77117">
    <property type="protein sequence ID" value="AAB99448.1"/>
    <property type="molecule type" value="Genomic_DNA"/>
</dbReference>
<dbReference type="PIR" id="F64479">
    <property type="entry name" value="F64479"/>
</dbReference>
<dbReference type="SMR" id="Q58834"/>
<dbReference type="STRING" id="243232.MJ_1439"/>
<dbReference type="PaxDb" id="243232-MJ_1439"/>
<dbReference type="EnsemblBacteria" id="AAB99448">
    <property type="protein sequence ID" value="AAB99448"/>
    <property type="gene ID" value="MJ_1439"/>
</dbReference>
<dbReference type="KEGG" id="mja:MJ_1439"/>
<dbReference type="eggNOG" id="arCOG03192">
    <property type="taxonomic scope" value="Archaea"/>
</dbReference>
<dbReference type="HOGENOM" id="CLU_046484_5_3_2"/>
<dbReference type="InParanoid" id="Q58834"/>
<dbReference type="OrthoDB" id="3327at2157"/>
<dbReference type="PhylomeDB" id="Q58834"/>
<dbReference type="Proteomes" id="UP000000805">
    <property type="component" value="Chromosome"/>
</dbReference>
<dbReference type="GO" id="GO:0004519">
    <property type="term" value="F:endonuclease activity"/>
    <property type="evidence" value="ECO:0007669"/>
    <property type="project" value="UniProtKB-KW"/>
</dbReference>
<dbReference type="GO" id="GO:0003676">
    <property type="term" value="F:nucleic acid binding"/>
    <property type="evidence" value="ECO:0007669"/>
    <property type="project" value="InterPro"/>
</dbReference>
<dbReference type="CDD" id="cd00175">
    <property type="entry name" value="SNc"/>
    <property type="match status" value="1"/>
</dbReference>
<dbReference type="FunFam" id="2.40.50.90:FF:000119">
    <property type="entry name" value="Thermococcal nuclease homolog"/>
    <property type="match status" value="1"/>
</dbReference>
<dbReference type="Gene3D" id="2.40.50.90">
    <property type="match status" value="1"/>
</dbReference>
<dbReference type="InterPro" id="IPR035437">
    <property type="entry name" value="SNase_OB-fold_sf"/>
</dbReference>
<dbReference type="InterPro" id="IPR016071">
    <property type="entry name" value="Staphylococal_nuclease_OB-fold"/>
</dbReference>
<dbReference type="InterPro" id="IPR002071">
    <property type="entry name" value="Thermonucl_AS"/>
</dbReference>
<dbReference type="PANTHER" id="PTHR12302">
    <property type="entry name" value="EBNA2 BINDING PROTEIN P100"/>
    <property type="match status" value="1"/>
</dbReference>
<dbReference type="PANTHER" id="PTHR12302:SF3">
    <property type="entry name" value="SERINE_THREONINE-PROTEIN KINASE 31"/>
    <property type="match status" value="1"/>
</dbReference>
<dbReference type="Pfam" id="PF00565">
    <property type="entry name" value="SNase"/>
    <property type="match status" value="1"/>
</dbReference>
<dbReference type="SMART" id="SM00318">
    <property type="entry name" value="SNc"/>
    <property type="match status" value="1"/>
</dbReference>
<dbReference type="SUPFAM" id="SSF50199">
    <property type="entry name" value="Staphylococcal nuclease"/>
    <property type="match status" value="1"/>
</dbReference>
<dbReference type="PROSITE" id="PS51257">
    <property type="entry name" value="PROKAR_LIPOPROTEIN"/>
    <property type="match status" value="1"/>
</dbReference>
<dbReference type="PROSITE" id="PS01123">
    <property type="entry name" value="TNASE_1"/>
    <property type="match status" value="1"/>
</dbReference>
<dbReference type="PROSITE" id="PS01284">
    <property type="entry name" value="TNASE_2"/>
    <property type="match status" value="1"/>
</dbReference>
<dbReference type="PROSITE" id="PS50830">
    <property type="entry name" value="TNASE_3"/>
    <property type="match status" value="1"/>
</dbReference>
<name>Y1439_METJA</name>
<accession>Q58834</accession>
<reference key="1">
    <citation type="journal article" date="1996" name="Science">
        <title>Complete genome sequence of the methanogenic archaeon, Methanococcus jannaschii.</title>
        <authorList>
            <person name="Bult C.J."/>
            <person name="White O."/>
            <person name="Olsen G.J."/>
            <person name="Zhou L."/>
            <person name="Fleischmann R.D."/>
            <person name="Sutton G.G."/>
            <person name="Blake J.A."/>
            <person name="FitzGerald L.M."/>
            <person name="Clayton R.A."/>
            <person name="Gocayne J.D."/>
            <person name="Kerlavage A.R."/>
            <person name="Dougherty B.A."/>
            <person name="Tomb J.-F."/>
            <person name="Adams M.D."/>
            <person name="Reich C.I."/>
            <person name="Overbeek R."/>
            <person name="Kirkness E.F."/>
            <person name="Weinstock K.G."/>
            <person name="Merrick J.M."/>
            <person name="Glodek A."/>
            <person name="Scott J.L."/>
            <person name="Geoghagen N.S.M."/>
            <person name="Weidman J.F."/>
            <person name="Fuhrmann J.L."/>
            <person name="Nguyen D."/>
            <person name="Utterback T.R."/>
            <person name="Kelley J.M."/>
            <person name="Peterson J.D."/>
            <person name="Sadow P.W."/>
            <person name="Hanna M.C."/>
            <person name="Cotton M.D."/>
            <person name="Roberts K.M."/>
            <person name="Hurst M.A."/>
            <person name="Kaine B.P."/>
            <person name="Borodovsky M."/>
            <person name="Klenk H.-P."/>
            <person name="Fraser C.M."/>
            <person name="Smith H.O."/>
            <person name="Woese C.R."/>
            <person name="Venter J.C."/>
        </authorList>
    </citation>
    <scope>NUCLEOTIDE SEQUENCE [LARGE SCALE GENOMIC DNA]</scope>
    <source>
        <strain>ATCC 43067 / DSM 2661 / JAL-1 / JCM 10045 / NBRC 100440</strain>
    </source>
</reference>
<feature type="chain" id="PRO_0000215283" description="Uncharacterized protein MJ1439">
    <location>
        <begin position="1"/>
        <end position="207"/>
    </location>
</feature>
<feature type="active site" evidence="1">
    <location>
        <position position="80"/>
    </location>
</feature>
<feature type="active site" evidence="1">
    <location>
        <position position="88"/>
    </location>
</feature>
<feature type="active site" evidence="1">
    <location>
        <position position="148"/>
    </location>
</feature>
<comment type="similarity">
    <text evidence="2">Belongs to the thermonuclease family.</text>
</comment>